<keyword id="KW-0175">Coiled coil</keyword>
<keyword id="KW-0238">DNA-binding</keyword>
<keyword id="KW-1185">Reference proteome</keyword>
<keyword id="KW-0804">Transcription</keyword>
<keyword id="KW-0805">Transcription regulation</keyword>
<gene>
    <name evidence="1" type="primary">greA</name>
    <name type="ordered locus">Cla_1372</name>
</gene>
<accession>B9KDP9</accession>
<proteinExistence type="inferred from homology"/>
<feature type="chain" id="PRO_1000118952" description="Transcription elongation factor GreA">
    <location>
        <begin position="1"/>
        <end position="161"/>
    </location>
</feature>
<feature type="coiled-coil region" evidence="1">
    <location>
        <begin position="45"/>
        <end position="65"/>
    </location>
</feature>
<evidence type="ECO:0000255" key="1">
    <source>
        <dbReference type="HAMAP-Rule" id="MF_00105"/>
    </source>
</evidence>
<sequence length="161" mass="18266">MQKEPMSKYGYEKLEKELEHLKKVERPKVVEEIDIARSHGDLKENAEYHAAREKQAFIEGKIAELGDLISRAQIIDPASYEHDSVKFGSCVVVEDLESEKQSTYTIVGVNEGNLEKGYISINSPIARAMLGKKEGDDFKVRLPKGESEFEIISIEYKALEF</sequence>
<dbReference type="EMBL" id="CP000932">
    <property type="protein sequence ID" value="ACM64687.1"/>
    <property type="molecule type" value="Genomic_DNA"/>
</dbReference>
<dbReference type="RefSeq" id="WP_012662070.1">
    <property type="nucleotide sequence ID" value="NC_012039.1"/>
</dbReference>
<dbReference type="SMR" id="B9KDP9"/>
<dbReference type="STRING" id="306263.Cla_1372"/>
<dbReference type="KEGG" id="cla:CLA_1372"/>
<dbReference type="PATRIC" id="fig|306263.5.peg.1358"/>
<dbReference type="eggNOG" id="COG0782">
    <property type="taxonomic scope" value="Bacteria"/>
</dbReference>
<dbReference type="HOGENOM" id="CLU_101379_2_0_7"/>
<dbReference type="Proteomes" id="UP000007727">
    <property type="component" value="Chromosome"/>
</dbReference>
<dbReference type="GO" id="GO:0003677">
    <property type="term" value="F:DNA binding"/>
    <property type="evidence" value="ECO:0007669"/>
    <property type="project" value="UniProtKB-UniRule"/>
</dbReference>
<dbReference type="GO" id="GO:0070063">
    <property type="term" value="F:RNA polymerase binding"/>
    <property type="evidence" value="ECO:0007669"/>
    <property type="project" value="InterPro"/>
</dbReference>
<dbReference type="GO" id="GO:0006354">
    <property type="term" value="P:DNA-templated transcription elongation"/>
    <property type="evidence" value="ECO:0007669"/>
    <property type="project" value="TreeGrafter"/>
</dbReference>
<dbReference type="GO" id="GO:0032784">
    <property type="term" value="P:regulation of DNA-templated transcription elongation"/>
    <property type="evidence" value="ECO:0007669"/>
    <property type="project" value="UniProtKB-UniRule"/>
</dbReference>
<dbReference type="FunFam" id="1.10.287.180:FF:000001">
    <property type="entry name" value="Transcription elongation factor GreA"/>
    <property type="match status" value="1"/>
</dbReference>
<dbReference type="FunFam" id="3.10.50.30:FF:000001">
    <property type="entry name" value="Transcription elongation factor GreA"/>
    <property type="match status" value="1"/>
</dbReference>
<dbReference type="Gene3D" id="3.10.50.30">
    <property type="entry name" value="Transcription elongation factor, GreA/GreB, C-terminal domain"/>
    <property type="match status" value="1"/>
</dbReference>
<dbReference type="Gene3D" id="1.10.287.180">
    <property type="entry name" value="Transcription elongation factor, GreA/GreB, N-terminal domain"/>
    <property type="match status" value="1"/>
</dbReference>
<dbReference type="HAMAP" id="MF_00105">
    <property type="entry name" value="GreA_GreB"/>
    <property type="match status" value="1"/>
</dbReference>
<dbReference type="InterPro" id="IPR036953">
    <property type="entry name" value="GreA/GreB_C_sf"/>
</dbReference>
<dbReference type="InterPro" id="IPR018151">
    <property type="entry name" value="TF_GreA/GreB_CS"/>
</dbReference>
<dbReference type="InterPro" id="IPR006359">
    <property type="entry name" value="Tscrpt_elong_fac_GreA"/>
</dbReference>
<dbReference type="InterPro" id="IPR028624">
    <property type="entry name" value="Tscrpt_elong_fac_GreA/B"/>
</dbReference>
<dbReference type="InterPro" id="IPR001437">
    <property type="entry name" value="Tscrpt_elong_fac_GreA/B_C"/>
</dbReference>
<dbReference type="InterPro" id="IPR023459">
    <property type="entry name" value="Tscrpt_elong_fac_GreA/B_fam"/>
</dbReference>
<dbReference type="InterPro" id="IPR022691">
    <property type="entry name" value="Tscrpt_elong_fac_GreA/B_N"/>
</dbReference>
<dbReference type="InterPro" id="IPR036805">
    <property type="entry name" value="Tscrpt_elong_fac_GreA/B_N_sf"/>
</dbReference>
<dbReference type="NCBIfam" id="TIGR01462">
    <property type="entry name" value="greA"/>
    <property type="match status" value="1"/>
</dbReference>
<dbReference type="NCBIfam" id="NF001261">
    <property type="entry name" value="PRK00226.1-2"/>
    <property type="match status" value="1"/>
</dbReference>
<dbReference type="NCBIfam" id="NF001263">
    <property type="entry name" value="PRK00226.1-4"/>
    <property type="match status" value="1"/>
</dbReference>
<dbReference type="NCBIfam" id="NF001264">
    <property type="entry name" value="PRK00226.1-5"/>
    <property type="match status" value="1"/>
</dbReference>
<dbReference type="PANTHER" id="PTHR30437">
    <property type="entry name" value="TRANSCRIPTION ELONGATION FACTOR GREA"/>
    <property type="match status" value="1"/>
</dbReference>
<dbReference type="PANTHER" id="PTHR30437:SF4">
    <property type="entry name" value="TRANSCRIPTION ELONGATION FACTOR GREA"/>
    <property type="match status" value="1"/>
</dbReference>
<dbReference type="Pfam" id="PF01272">
    <property type="entry name" value="GreA_GreB"/>
    <property type="match status" value="1"/>
</dbReference>
<dbReference type="Pfam" id="PF03449">
    <property type="entry name" value="GreA_GreB_N"/>
    <property type="match status" value="1"/>
</dbReference>
<dbReference type="PIRSF" id="PIRSF006092">
    <property type="entry name" value="GreA_GreB"/>
    <property type="match status" value="1"/>
</dbReference>
<dbReference type="SUPFAM" id="SSF54534">
    <property type="entry name" value="FKBP-like"/>
    <property type="match status" value="1"/>
</dbReference>
<dbReference type="SUPFAM" id="SSF46557">
    <property type="entry name" value="GreA transcript cleavage protein, N-terminal domain"/>
    <property type="match status" value="1"/>
</dbReference>
<dbReference type="PROSITE" id="PS00829">
    <property type="entry name" value="GREAB_1"/>
    <property type="match status" value="1"/>
</dbReference>
<dbReference type="PROSITE" id="PS00830">
    <property type="entry name" value="GREAB_2"/>
    <property type="match status" value="1"/>
</dbReference>
<protein>
    <recommendedName>
        <fullName evidence="1">Transcription elongation factor GreA</fullName>
    </recommendedName>
    <alternativeName>
        <fullName evidence="1">Transcript cleavage factor GreA</fullName>
    </alternativeName>
</protein>
<organism>
    <name type="scientific">Campylobacter lari (strain RM2100 / D67 / ATCC BAA-1060)</name>
    <dbReference type="NCBI Taxonomy" id="306263"/>
    <lineage>
        <taxon>Bacteria</taxon>
        <taxon>Pseudomonadati</taxon>
        <taxon>Campylobacterota</taxon>
        <taxon>Epsilonproteobacteria</taxon>
        <taxon>Campylobacterales</taxon>
        <taxon>Campylobacteraceae</taxon>
        <taxon>Campylobacter</taxon>
    </lineage>
</organism>
<name>GREA_CAMLR</name>
<comment type="function">
    <text evidence="1">Necessary for efficient RNA polymerase transcription elongation past template-encoded arresting sites. The arresting sites in DNA have the property of trapping a certain fraction of elongating RNA polymerases that pass through, resulting in locked ternary complexes. Cleavage of the nascent transcript by cleavage factors such as GreA or GreB allows the resumption of elongation from the new 3'terminus. GreA releases sequences of 2 to 3 nucleotides.</text>
</comment>
<comment type="similarity">
    <text evidence="1">Belongs to the GreA/GreB family.</text>
</comment>
<reference key="1">
    <citation type="journal article" date="2008" name="Foodborne Pathog. Dis.">
        <title>The complete genome sequence and analysis of the human pathogen Campylobacter lari.</title>
        <authorList>
            <person name="Miller W.G."/>
            <person name="Wang G."/>
            <person name="Binnewies T.T."/>
            <person name="Parker C.T."/>
        </authorList>
    </citation>
    <scope>NUCLEOTIDE SEQUENCE [LARGE SCALE GENOMIC DNA]</scope>
    <source>
        <strain>RM2100 / D67 / ATCC BAA-1060</strain>
    </source>
</reference>